<gene>
    <name type="primary">Dcp-1</name>
    <name type="ORF">CG5370</name>
</gene>
<dbReference type="EC" id="3.4.22.-"/>
<dbReference type="EMBL" id="AF001464">
    <property type="protein sequence ID" value="AAB58237.1"/>
    <property type="molecule type" value="mRNA"/>
</dbReference>
<dbReference type="EMBL" id="AE013599">
    <property type="protein sequence ID" value="AAF47027.1"/>
    <property type="molecule type" value="Genomic_DNA"/>
</dbReference>
<dbReference type="EMBL" id="BT010065">
    <property type="protein sequence ID" value="AAQ22534.1"/>
    <property type="molecule type" value="mRNA"/>
</dbReference>
<dbReference type="RefSeq" id="NP_476974.1">
    <property type="nucleotide sequence ID" value="NM_057626.4"/>
</dbReference>
<dbReference type="SMR" id="O02002"/>
<dbReference type="BioGRID" id="63329">
    <property type="interactions" value="46"/>
</dbReference>
<dbReference type="ELM" id="O02002"/>
<dbReference type="FunCoup" id="O02002">
    <property type="interactions" value="678"/>
</dbReference>
<dbReference type="IntAct" id="O02002">
    <property type="interactions" value="2"/>
</dbReference>
<dbReference type="STRING" id="7227.FBpp0071971"/>
<dbReference type="MEROPS" id="C14.016"/>
<dbReference type="PaxDb" id="7227-FBpp0071971"/>
<dbReference type="EnsemblMetazoa" id="FBtr0072062">
    <property type="protein sequence ID" value="FBpp0071971"/>
    <property type="gene ID" value="FBgn0010501"/>
</dbReference>
<dbReference type="GeneID" id="37729"/>
<dbReference type="KEGG" id="dme:Dmel_CG5370"/>
<dbReference type="AGR" id="FB:FBgn0010501"/>
<dbReference type="CTD" id="37729"/>
<dbReference type="FlyBase" id="FBgn0010501">
    <property type="gene designation" value="Dcp-1"/>
</dbReference>
<dbReference type="VEuPathDB" id="VectorBase:FBgn0010501"/>
<dbReference type="eggNOG" id="KOG3573">
    <property type="taxonomic scope" value="Eukaryota"/>
</dbReference>
<dbReference type="GeneTree" id="ENSGT00940000153232"/>
<dbReference type="HOGENOM" id="CLU_036904_2_0_1"/>
<dbReference type="InParanoid" id="O02002"/>
<dbReference type="OMA" id="WHYFTAT"/>
<dbReference type="OrthoDB" id="6116485at2759"/>
<dbReference type="PhylomeDB" id="O02002"/>
<dbReference type="BRENDA" id="3.4.22.36">
    <property type="organism ID" value="1994"/>
</dbReference>
<dbReference type="Reactome" id="R-DME-111458">
    <property type="pathway name" value="Formation of apoptosome"/>
</dbReference>
<dbReference type="Reactome" id="R-DME-111459">
    <property type="pathway name" value="Activation of caspases through apoptosome-mediated cleavage"/>
</dbReference>
<dbReference type="Reactome" id="R-DME-198323">
    <property type="pathway name" value="AKT phosphorylates targets in the cytosol"/>
</dbReference>
<dbReference type="Reactome" id="R-DME-5357905">
    <property type="pathway name" value="Regulation of TNFR1 signaling"/>
</dbReference>
<dbReference type="Reactome" id="R-DME-6803207">
    <property type="pathway name" value="TP53 Regulates Transcription of Caspase Activators and Caspases"/>
</dbReference>
<dbReference type="Reactome" id="R-DME-9627069">
    <property type="pathway name" value="Regulation of the apoptosome activity"/>
</dbReference>
<dbReference type="BioGRID-ORCS" id="37729">
    <property type="hits" value="0 hits in 3 CRISPR screens"/>
</dbReference>
<dbReference type="GenomeRNAi" id="37729"/>
<dbReference type="PRO" id="PR:O02002"/>
<dbReference type="Proteomes" id="UP000000803">
    <property type="component" value="Chromosome 2R"/>
</dbReference>
<dbReference type="Bgee" id="FBgn0010501">
    <property type="expression patterns" value="Expressed in adult anterior midgut class II enteroendocrine cell in adult midgut (Drosophila) and 75 other cell types or tissues"/>
</dbReference>
<dbReference type="GO" id="GO:0005737">
    <property type="term" value="C:cytoplasm"/>
    <property type="evidence" value="ECO:0000318"/>
    <property type="project" value="GO_Central"/>
</dbReference>
<dbReference type="GO" id="GO:0005829">
    <property type="term" value="C:cytosol"/>
    <property type="evidence" value="ECO:0000250"/>
    <property type="project" value="FlyBase"/>
</dbReference>
<dbReference type="GO" id="GO:0005759">
    <property type="term" value="C:mitochondrial matrix"/>
    <property type="evidence" value="ECO:0000314"/>
    <property type="project" value="FlyBase"/>
</dbReference>
<dbReference type="GO" id="GO:0043025">
    <property type="term" value="C:neuronal cell body"/>
    <property type="evidence" value="ECO:0000314"/>
    <property type="project" value="UniProtKB"/>
</dbReference>
<dbReference type="GO" id="GO:0071598">
    <property type="term" value="C:neuronal ribonucleoprotein granule"/>
    <property type="evidence" value="ECO:0000314"/>
    <property type="project" value="UniProtKB"/>
</dbReference>
<dbReference type="GO" id="GO:1990525">
    <property type="term" value="F:BIR domain binding"/>
    <property type="evidence" value="ECO:0000353"/>
    <property type="project" value="FlyBase"/>
</dbReference>
<dbReference type="GO" id="GO:0004197">
    <property type="term" value="F:cysteine-type endopeptidase activity"/>
    <property type="evidence" value="ECO:0000314"/>
    <property type="project" value="FlyBase"/>
</dbReference>
<dbReference type="GO" id="GO:0006915">
    <property type="term" value="P:apoptotic process"/>
    <property type="evidence" value="ECO:0000314"/>
    <property type="project" value="FlyBase"/>
</dbReference>
<dbReference type="GO" id="GO:0009267">
    <property type="term" value="P:cellular response to starvation"/>
    <property type="evidence" value="ECO:0000315"/>
    <property type="project" value="FlyBase"/>
</dbReference>
<dbReference type="GO" id="GO:0097194">
    <property type="term" value="P:execution phase of apoptosis"/>
    <property type="evidence" value="ECO:0000315"/>
    <property type="project" value="FlyBase"/>
</dbReference>
<dbReference type="GO" id="GO:1900074">
    <property type="term" value="P:negative regulation of neuromuscular synaptic transmission"/>
    <property type="evidence" value="ECO:0000315"/>
    <property type="project" value="FlyBase"/>
</dbReference>
<dbReference type="GO" id="GO:0045751">
    <property type="term" value="P:negative regulation of Toll signaling pathway"/>
    <property type="evidence" value="ECO:0000315"/>
    <property type="project" value="FlyBase"/>
</dbReference>
<dbReference type="GO" id="GO:0016322">
    <property type="term" value="P:neuron remodeling"/>
    <property type="evidence" value="ECO:0000315"/>
    <property type="project" value="FlyBase"/>
</dbReference>
<dbReference type="GO" id="GO:0045476">
    <property type="term" value="P:nurse cell apoptotic process"/>
    <property type="evidence" value="ECO:0000315"/>
    <property type="project" value="FlyBase"/>
</dbReference>
<dbReference type="GO" id="GO:0048477">
    <property type="term" value="P:oogenesis"/>
    <property type="evidence" value="ECO:0000315"/>
    <property type="project" value="FlyBase"/>
</dbReference>
<dbReference type="GO" id="GO:0007300">
    <property type="term" value="P:ovarian nurse cell to oocyte transport"/>
    <property type="evidence" value="ECO:0000304"/>
    <property type="project" value="FlyBase"/>
</dbReference>
<dbReference type="GO" id="GO:0010508">
    <property type="term" value="P:positive regulation of autophagy"/>
    <property type="evidence" value="ECO:0000314"/>
    <property type="project" value="FlyBase"/>
</dbReference>
<dbReference type="GO" id="GO:0016239">
    <property type="term" value="P:positive regulation of macroautophagy"/>
    <property type="evidence" value="ECO:0000315"/>
    <property type="project" value="FlyBase"/>
</dbReference>
<dbReference type="GO" id="GO:0043525">
    <property type="term" value="P:positive regulation of neuron apoptotic process"/>
    <property type="evidence" value="ECO:0000318"/>
    <property type="project" value="GO_Central"/>
</dbReference>
<dbReference type="GO" id="GO:0012501">
    <property type="term" value="P:programmed cell death"/>
    <property type="evidence" value="ECO:0000314"/>
    <property type="project" value="FlyBase"/>
</dbReference>
<dbReference type="GO" id="GO:0010623">
    <property type="term" value="P:programmed cell death involved in cell development"/>
    <property type="evidence" value="ECO:0000315"/>
    <property type="project" value="FlyBase"/>
</dbReference>
<dbReference type="GO" id="GO:0006508">
    <property type="term" value="P:proteolysis"/>
    <property type="evidence" value="ECO:0007669"/>
    <property type="project" value="UniProtKB-KW"/>
</dbReference>
<dbReference type="CDD" id="cd00032">
    <property type="entry name" value="CASc"/>
    <property type="match status" value="1"/>
</dbReference>
<dbReference type="FunFam" id="3.40.50.1460:FF:000001">
    <property type="entry name" value="Caspase-3 preproprotein"/>
    <property type="match status" value="1"/>
</dbReference>
<dbReference type="Gene3D" id="3.40.50.1460">
    <property type="match status" value="1"/>
</dbReference>
<dbReference type="InterPro" id="IPR029030">
    <property type="entry name" value="Caspase-like_dom_sf"/>
</dbReference>
<dbReference type="InterPro" id="IPR033139">
    <property type="entry name" value="Caspase_cys_AS"/>
</dbReference>
<dbReference type="InterPro" id="IPR016129">
    <property type="entry name" value="Caspase_his_AS"/>
</dbReference>
<dbReference type="InterPro" id="IPR002398">
    <property type="entry name" value="Pept_C14"/>
</dbReference>
<dbReference type="InterPro" id="IPR011600">
    <property type="entry name" value="Pept_C14_caspase"/>
</dbReference>
<dbReference type="InterPro" id="IPR002138">
    <property type="entry name" value="Pept_C14_p10"/>
</dbReference>
<dbReference type="InterPro" id="IPR001309">
    <property type="entry name" value="Pept_C14_p20"/>
</dbReference>
<dbReference type="InterPro" id="IPR015917">
    <property type="entry name" value="Pept_C14A"/>
</dbReference>
<dbReference type="PANTHER" id="PTHR10454">
    <property type="entry name" value="CASPASE"/>
    <property type="match status" value="1"/>
</dbReference>
<dbReference type="PANTHER" id="PTHR10454:SF245">
    <property type="entry name" value="CASPASE-RELATED"/>
    <property type="match status" value="1"/>
</dbReference>
<dbReference type="Pfam" id="PF00656">
    <property type="entry name" value="Peptidase_C14"/>
    <property type="match status" value="1"/>
</dbReference>
<dbReference type="PRINTS" id="PR00376">
    <property type="entry name" value="IL1BCENZYME"/>
</dbReference>
<dbReference type="SMART" id="SM00115">
    <property type="entry name" value="CASc"/>
    <property type="match status" value="1"/>
</dbReference>
<dbReference type="SUPFAM" id="SSF52129">
    <property type="entry name" value="Caspase-like"/>
    <property type="match status" value="1"/>
</dbReference>
<dbReference type="PROSITE" id="PS01122">
    <property type="entry name" value="CASPASE_CYS"/>
    <property type="match status" value="1"/>
</dbReference>
<dbReference type="PROSITE" id="PS01121">
    <property type="entry name" value="CASPASE_HIS"/>
    <property type="match status" value="1"/>
</dbReference>
<dbReference type="PROSITE" id="PS50207">
    <property type="entry name" value="CASPASE_P10"/>
    <property type="match status" value="1"/>
</dbReference>
<dbReference type="PROSITE" id="PS50208">
    <property type="entry name" value="CASPASE_P20"/>
    <property type="match status" value="1"/>
</dbReference>
<evidence type="ECO:0000250" key="1"/>
<evidence type="ECO:0000269" key="2">
    <source>
    </source>
</evidence>
<evidence type="ECO:0000305" key="3"/>
<name>CASP1_DROME</name>
<proteinExistence type="evidence at protein level"/>
<keyword id="KW-0053">Apoptosis</keyword>
<keyword id="KW-0903">Direct protein sequencing</keyword>
<keyword id="KW-0378">Hydrolase</keyword>
<keyword id="KW-0645">Protease</keyword>
<keyword id="KW-1185">Reference proteome</keyword>
<keyword id="KW-0788">Thiol protease</keyword>
<keyword id="KW-0865">Zymogen</keyword>
<comment type="function">
    <text evidence="1">Involved in the activation cascade of caspases responsible for apoptosis execution (By similarity). Proteolytically cleaves poly(ADP-ribose) polymerase (PARP). Loss of zygotic DCP-1 function causes larval lethality and melanotic tumors.</text>
</comment>
<comment type="subunit">
    <text>Heterotetramer that consists of two anti-parallel arranged heterodimers, each one formed by a 22 kDa (p22) and a 13 kDa (p13) subunit.</text>
</comment>
<comment type="developmental stage">
    <text>Present uniformly throughout embryos of stages 4 and 10. In stage 16 embryos, the expression becomes restricted to the central nervous system, the developing gonads, and a portion of the gut. In stage 17 embryos, expression is mainly localized in cells along the midline of the central nervous system.</text>
</comment>
<comment type="similarity">
    <text evidence="3">Belongs to the peptidase C14A family.</text>
</comment>
<feature type="propeptide" id="PRO_0000004662" evidence="3">
    <location>
        <begin position="1"/>
        <end position="33"/>
    </location>
</feature>
<feature type="chain" id="PRO_0000004663" description="Caspase-1 subunit p22">
    <location>
        <begin position="34"/>
        <end position="202"/>
    </location>
</feature>
<feature type="propeptide" id="PRO_0000004664" evidence="2">
    <location>
        <begin position="203"/>
        <end position="215"/>
    </location>
</feature>
<feature type="chain" id="PRO_0000004665" description="Caspase-1 subunit p13">
    <location>
        <begin position="216"/>
        <end position="323"/>
    </location>
</feature>
<feature type="active site" evidence="1">
    <location>
        <position position="154"/>
    </location>
</feature>
<feature type="active site" evidence="1">
    <location>
        <position position="196"/>
    </location>
</feature>
<reference key="1">
    <citation type="journal article" date="1997" name="Science">
        <title>DCP-1, a Drosophila cell death protease essential for development.</title>
        <authorList>
            <person name="Song Z."/>
            <person name="McCall K."/>
            <person name="Steller H."/>
        </authorList>
    </citation>
    <scope>NUCLEOTIDE SEQUENCE [MRNA]</scope>
    <scope>PROTEIN SEQUENCE OF 216-248</scope>
    <source>
        <tissue>Embryo</tissue>
    </source>
</reference>
<reference key="2">
    <citation type="journal article" date="1997" name="Science">
        <authorList>
            <person name="Song Z."/>
            <person name="McCall K."/>
            <person name="Steller H."/>
        </authorList>
    </citation>
    <scope>ERRATUM OF PUBMED:8999799</scope>
</reference>
<reference key="3">
    <citation type="journal article" date="2000" name="Science">
        <title>The genome sequence of Drosophila melanogaster.</title>
        <authorList>
            <person name="Adams M.D."/>
            <person name="Celniker S.E."/>
            <person name="Holt R.A."/>
            <person name="Evans C.A."/>
            <person name="Gocayne J.D."/>
            <person name="Amanatides P.G."/>
            <person name="Scherer S.E."/>
            <person name="Li P.W."/>
            <person name="Hoskins R.A."/>
            <person name="Galle R.F."/>
            <person name="George R.A."/>
            <person name="Lewis S.E."/>
            <person name="Richards S."/>
            <person name="Ashburner M."/>
            <person name="Henderson S.N."/>
            <person name="Sutton G.G."/>
            <person name="Wortman J.R."/>
            <person name="Yandell M.D."/>
            <person name="Zhang Q."/>
            <person name="Chen L.X."/>
            <person name="Brandon R.C."/>
            <person name="Rogers Y.-H.C."/>
            <person name="Blazej R.G."/>
            <person name="Champe M."/>
            <person name="Pfeiffer B.D."/>
            <person name="Wan K.H."/>
            <person name="Doyle C."/>
            <person name="Baxter E.G."/>
            <person name="Helt G."/>
            <person name="Nelson C.R."/>
            <person name="Miklos G.L.G."/>
            <person name="Abril J.F."/>
            <person name="Agbayani A."/>
            <person name="An H.-J."/>
            <person name="Andrews-Pfannkoch C."/>
            <person name="Baldwin D."/>
            <person name="Ballew R.M."/>
            <person name="Basu A."/>
            <person name="Baxendale J."/>
            <person name="Bayraktaroglu L."/>
            <person name="Beasley E.M."/>
            <person name="Beeson K.Y."/>
            <person name="Benos P.V."/>
            <person name="Berman B.P."/>
            <person name="Bhandari D."/>
            <person name="Bolshakov S."/>
            <person name="Borkova D."/>
            <person name="Botchan M.R."/>
            <person name="Bouck J."/>
            <person name="Brokstein P."/>
            <person name="Brottier P."/>
            <person name="Burtis K.C."/>
            <person name="Busam D.A."/>
            <person name="Butler H."/>
            <person name="Cadieu E."/>
            <person name="Center A."/>
            <person name="Chandra I."/>
            <person name="Cherry J.M."/>
            <person name="Cawley S."/>
            <person name="Dahlke C."/>
            <person name="Davenport L.B."/>
            <person name="Davies P."/>
            <person name="de Pablos B."/>
            <person name="Delcher A."/>
            <person name="Deng Z."/>
            <person name="Mays A.D."/>
            <person name="Dew I."/>
            <person name="Dietz S.M."/>
            <person name="Dodson K."/>
            <person name="Doup L.E."/>
            <person name="Downes M."/>
            <person name="Dugan-Rocha S."/>
            <person name="Dunkov B.C."/>
            <person name="Dunn P."/>
            <person name="Durbin K.J."/>
            <person name="Evangelista C.C."/>
            <person name="Ferraz C."/>
            <person name="Ferriera S."/>
            <person name="Fleischmann W."/>
            <person name="Fosler C."/>
            <person name="Gabrielian A.E."/>
            <person name="Garg N.S."/>
            <person name="Gelbart W.M."/>
            <person name="Glasser K."/>
            <person name="Glodek A."/>
            <person name="Gong F."/>
            <person name="Gorrell J.H."/>
            <person name="Gu Z."/>
            <person name="Guan P."/>
            <person name="Harris M."/>
            <person name="Harris N.L."/>
            <person name="Harvey D.A."/>
            <person name="Heiman T.J."/>
            <person name="Hernandez J.R."/>
            <person name="Houck J."/>
            <person name="Hostin D."/>
            <person name="Houston K.A."/>
            <person name="Howland T.J."/>
            <person name="Wei M.-H."/>
            <person name="Ibegwam C."/>
            <person name="Jalali M."/>
            <person name="Kalush F."/>
            <person name="Karpen G.H."/>
            <person name="Ke Z."/>
            <person name="Kennison J.A."/>
            <person name="Ketchum K.A."/>
            <person name="Kimmel B.E."/>
            <person name="Kodira C.D."/>
            <person name="Kraft C.L."/>
            <person name="Kravitz S."/>
            <person name="Kulp D."/>
            <person name="Lai Z."/>
            <person name="Lasko P."/>
            <person name="Lei Y."/>
            <person name="Levitsky A.A."/>
            <person name="Li J.H."/>
            <person name="Li Z."/>
            <person name="Liang Y."/>
            <person name="Lin X."/>
            <person name="Liu X."/>
            <person name="Mattei B."/>
            <person name="McIntosh T.C."/>
            <person name="McLeod M.P."/>
            <person name="McPherson D."/>
            <person name="Merkulov G."/>
            <person name="Milshina N.V."/>
            <person name="Mobarry C."/>
            <person name="Morris J."/>
            <person name="Moshrefi A."/>
            <person name="Mount S.M."/>
            <person name="Moy M."/>
            <person name="Murphy B."/>
            <person name="Murphy L."/>
            <person name="Muzny D.M."/>
            <person name="Nelson D.L."/>
            <person name="Nelson D.R."/>
            <person name="Nelson K.A."/>
            <person name="Nixon K."/>
            <person name="Nusskern D.R."/>
            <person name="Pacleb J.M."/>
            <person name="Palazzolo M."/>
            <person name="Pittman G.S."/>
            <person name="Pan S."/>
            <person name="Pollard J."/>
            <person name="Puri V."/>
            <person name="Reese M.G."/>
            <person name="Reinert K."/>
            <person name="Remington K."/>
            <person name="Saunders R.D.C."/>
            <person name="Scheeler F."/>
            <person name="Shen H."/>
            <person name="Shue B.C."/>
            <person name="Siden-Kiamos I."/>
            <person name="Simpson M."/>
            <person name="Skupski M.P."/>
            <person name="Smith T.J."/>
            <person name="Spier E."/>
            <person name="Spradling A.C."/>
            <person name="Stapleton M."/>
            <person name="Strong R."/>
            <person name="Sun E."/>
            <person name="Svirskas R."/>
            <person name="Tector C."/>
            <person name="Turner R."/>
            <person name="Venter E."/>
            <person name="Wang A.H."/>
            <person name="Wang X."/>
            <person name="Wang Z.-Y."/>
            <person name="Wassarman D.A."/>
            <person name="Weinstock G.M."/>
            <person name="Weissenbach J."/>
            <person name="Williams S.M."/>
            <person name="Woodage T."/>
            <person name="Worley K.C."/>
            <person name="Wu D."/>
            <person name="Yang S."/>
            <person name="Yao Q.A."/>
            <person name="Ye J."/>
            <person name="Yeh R.-F."/>
            <person name="Zaveri J.S."/>
            <person name="Zhan M."/>
            <person name="Zhang G."/>
            <person name="Zhao Q."/>
            <person name="Zheng L."/>
            <person name="Zheng X.H."/>
            <person name="Zhong F.N."/>
            <person name="Zhong W."/>
            <person name="Zhou X."/>
            <person name="Zhu S.C."/>
            <person name="Zhu X."/>
            <person name="Smith H.O."/>
            <person name="Gibbs R.A."/>
            <person name="Myers E.W."/>
            <person name="Rubin G.M."/>
            <person name="Venter J.C."/>
        </authorList>
    </citation>
    <scope>NUCLEOTIDE SEQUENCE [LARGE SCALE GENOMIC DNA]</scope>
    <source>
        <strain>Berkeley</strain>
    </source>
</reference>
<reference key="4">
    <citation type="journal article" date="2002" name="Genome Biol.">
        <title>Annotation of the Drosophila melanogaster euchromatic genome: a systematic review.</title>
        <authorList>
            <person name="Misra S."/>
            <person name="Crosby M.A."/>
            <person name="Mungall C.J."/>
            <person name="Matthews B.B."/>
            <person name="Campbell K.S."/>
            <person name="Hradecky P."/>
            <person name="Huang Y."/>
            <person name="Kaminker J.S."/>
            <person name="Millburn G.H."/>
            <person name="Prochnik S.E."/>
            <person name="Smith C.D."/>
            <person name="Tupy J.L."/>
            <person name="Whitfield E.J."/>
            <person name="Bayraktaroglu L."/>
            <person name="Berman B.P."/>
            <person name="Bettencourt B.R."/>
            <person name="Celniker S.E."/>
            <person name="de Grey A.D.N.J."/>
            <person name="Drysdale R.A."/>
            <person name="Harris N.L."/>
            <person name="Richter J."/>
            <person name="Russo S."/>
            <person name="Schroeder A.J."/>
            <person name="Shu S.Q."/>
            <person name="Stapleton M."/>
            <person name="Yamada C."/>
            <person name="Ashburner M."/>
            <person name="Gelbart W.M."/>
            <person name="Rubin G.M."/>
            <person name="Lewis S.E."/>
        </authorList>
    </citation>
    <scope>GENOME REANNOTATION</scope>
    <source>
        <strain>Berkeley</strain>
    </source>
</reference>
<reference key="5">
    <citation type="submission" date="2003-08" db="EMBL/GenBank/DDBJ databases">
        <authorList>
            <person name="Stapleton M."/>
            <person name="Brokstein P."/>
            <person name="Hong L."/>
            <person name="Agbayani A."/>
            <person name="Carlson J.W."/>
            <person name="Champe M."/>
            <person name="Chavez C."/>
            <person name="Dorsett V."/>
            <person name="Dresnek D."/>
            <person name="Farfan D."/>
            <person name="Frise E."/>
            <person name="George R.A."/>
            <person name="Gonzalez M."/>
            <person name="Guarin H."/>
            <person name="Kronmiller B."/>
            <person name="Li P.W."/>
            <person name="Liao G."/>
            <person name="Miranda A."/>
            <person name="Mungall C.J."/>
            <person name="Nunoo J."/>
            <person name="Pacleb J.M."/>
            <person name="Paragas V."/>
            <person name="Park S."/>
            <person name="Patel S."/>
            <person name="Phouanenavong S."/>
            <person name="Wan K.H."/>
            <person name="Yu C."/>
            <person name="Lewis S.E."/>
            <person name="Rubin G.M."/>
            <person name="Celniker S.E."/>
        </authorList>
    </citation>
    <scope>NUCLEOTIDE SEQUENCE [LARGE SCALE MRNA]</scope>
    <source>
        <strain>Berkeley</strain>
        <tissue>Embryo</tissue>
    </source>
</reference>
<protein>
    <recommendedName>
        <fullName>Caspase-1</fullName>
        <ecNumber>3.4.22.-</ecNumber>
    </recommendedName>
    <component>
        <recommendedName>
            <fullName>Caspase-1 subunit p22</fullName>
        </recommendedName>
    </component>
    <component>
        <recommendedName>
            <fullName>Caspase-1 subunit p13</fullName>
        </recommendedName>
    </component>
</protein>
<sequence length="323" mass="35927">MTDECVTRNYGVGIRSPNGSENRGSFIMADNTDAKGCTPESLVVGGATAASPLPANKFVARMPVERYASEYNMSHKHRGVALIFNHEFFDIPSLKSRTGTNVDAQELKKAFENLGFAVSVHKDCKLRDILKHVGKAAELDHTDNDCLAVAILSHGEHGYLYAKDTQYKLDNIWHYFTATFCPSLAGKPKLFFIQACQGDRLDGGITLEKGVTETDGESSTSYKIPIHADFLFSYSTIPGYFSWRNINNGSWYMQSLIRELNANGKKYDLLTLLTFVNQRVALDFESNVPATPMMDRQKQIPCLTSMLTRILRFGDKPNGNKAG</sequence>
<accession>O02002</accession>
<accession>Q9W1N0</accession>
<organism>
    <name type="scientific">Drosophila melanogaster</name>
    <name type="common">Fruit fly</name>
    <dbReference type="NCBI Taxonomy" id="7227"/>
    <lineage>
        <taxon>Eukaryota</taxon>
        <taxon>Metazoa</taxon>
        <taxon>Ecdysozoa</taxon>
        <taxon>Arthropoda</taxon>
        <taxon>Hexapoda</taxon>
        <taxon>Insecta</taxon>
        <taxon>Pterygota</taxon>
        <taxon>Neoptera</taxon>
        <taxon>Endopterygota</taxon>
        <taxon>Diptera</taxon>
        <taxon>Brachycera</taxon>
        <taxon>Muscomorpha</taxon>
        <taxon>Ephydroidea</taxon>
        <taxon>Drosophilidae</taxon>
        <taxon>Drosophila</taxon>
        <taxon>Sophophora</taxon>
    </lineage>
</organism>